<evidence type="ECO:0000255" key="1">
    <source>
        <dbReference type="HAMAP-Rule" id="MF_00091"/>
    </source>
</evidence>
<gene>
    <name evidence="1" type="primary">luxS</name>
    <name type="ordered locus">BCA_4922</name>
</gene>
<protein>
    <recommendedName>
        <fullName evidence="1">S-ribosylhomocysteine lyase</fullName>
        <ecNumber evidence="1">4.4.1.21</ecNumber>
    </recommendedName>
    <alternativeName>
        <fullName evidence="1">AI-2 synthesis protein</fullName>
    </alternativeName>
    <alternativeName>
        <fullName evidence="1">Autoinducer-2 production protein LuxS</fullName>
    </alternativeName>
</protein>
<organism>
    <name type="scientific">Bacillus cereus (strain 03BB102)</name>
    <dbReference type="NCBI Taxonomy" id="572264"/>
    <lineage>
        <taxon>Bacteria</taxon>
        <taxon>Bacillati</taxon>
        <taxon>Bacillota</taxon>
        <taxon>Bacilli</taxon>
        <taxon>Bacillales</taxon>
        <taxon>Bacillaceae</taxon>
        <taxon>Bacillus</taxon>
        <taxon>Bacillus cereus group</taxon>
    </lineage>
</organism>
<sequence length="157" mass="17928">MPSVESFELDHTIVKAPYVRHCGVHNVGSDGIVNKFDIRFCQPNKQAMKPDVIHTLEHLLAFNLRKYIDRYPHFDIIDISPMGCQTGYYLVVSGTPTVREIIDLLELTLKDAVQITEIPAANETQCGQAKLHDLEGAKRLMNFWLSQDKDELEKVFE</sequence>
<dbReference type="EC" id="4.4.1.21" evidence="1"/>
<dbReference type="EMBL" id="CP001407">
    <property type="protein sequence ID" value="ACO28162.1"/>
    <property type="molecule type" value="Genomic_DNA"/>
</dbReference>
<dbReference type="RefSeq" id="WP_001141368.1">
    <property type="nucleotide sequence ID" value="NC_012472.1"/>
</dbReference>
<dbReference type="SMR" id="C1EW66"/>
<dbReference type="KEGG" id="bcx:BCA_4922"/>
<dbReference type="PATRIC" id="fig|572264.18.peg.4868"/>
<dbReference type="Proteomes" id="UP000002210">
    <property type="component" value="Chromosome"/>
</dbReference>
<dbReference type="GO" id="GO:0005506">
    <property type="term" value="F:iron ion binding"/>
    <property type="evidence" value="ECO:0007669"/>
    <property type="project" value="InterPro"/>
</dbReference>
<dbReference type="GO" id="GO:0043768">
    <property type="term" value="F:S-ribosylhomocysteine lyase activity"/>
    <property type="evidence" value="ECO:0007669"/>
    <property type="project" value="UniProtKB-UniRule"/>
</dbReference>
<dbReference type="GO" id="GO:0009372">
    <property type="term" value="P:quorum sensing"/>
    <property type="evidence" value="ECO:0007669"/>
    <property type="project" value="UniProtKB-UniRule"/>
</dbReference>
<dbReference type="Gene3D" id="3.30.1360.80">
    <property type="entry name" value="S-ribosylhomocysteinase (LuxS)"/>
    <property type="match status" value="1"/>
</dbReference>
<dbReference type="HAMAP" id="MF_00091">
    <property type="entry name" value="LuxS"/>
    <property type="match status" value="1"/>
</dbReference>
<dbReference type="InterPro" id="IPR037005">
    <property type="entry name" value="LuxS_sf"/>
</dbReference>
<dbReference type="InterPro" id="IPR011249">
    <property type="entry name" value="Metalloenz_LuxS/M16"/>
</dbReference>
<dbReference type="InterPro" id="IPR003815">
    <property type="entry name" value="S-ribosylhomocysteinase"/>
</dbReference>
<dbReference type="NCBIfam" id="NF002603">
    <property type="entry name" value="PRK02260.1-3"/>
    <property type="match status" value="1"/>
</dbReference>
<dbReference type="PANTHER" id="PTHR35799">
    <property type="entry name" value="S-RIBOSYLHOMOCYSTEINE LYASE"/>
    <property type="match status" value="1"/>
</dbReference>
<dbReference type="PANTHER" id="PTHR35799:SF1">
    <property type="entry name" value="S-RIBOSYLHOMOCYSTEINE LYASE"/>
    <property type="match status" value="1"/>
</dbReference>
<dbReference type="Pfam" id="PF02664">
    <property type="entry name" value="LuxS"/>
    <property type="match status" value="1"/>
</dbReference>
<dbReference type="PIRSF" id="PIRSF006160">
    <property type="entry name" value="AI2"/>
    <property type="match status" value="1"/>
</dbReference>
<dbReference type="PRINTS" id="PR01487">
    <property type="entry name" value="LUXSPROTEIN"/>
</dbReference>
<dbReference type="SUPFAM" id="SSF63411">
    <property type="entry name" value="LuxS/MPP-like metallohydrolase"/>
    <property type="match status" value="1"/>
</dbReference>
<keyword id="KW-0071">Autoinducer synthesis</keyword>
<keyword id="KW-0408">Iron</keyword>
<keyword id="KW-0456">Lyase</keyword>
<keyword id="KW-0479">Metal-binding</keyword>
<keyword id="KW-0673">Quorum sensing</keyword>
<comment type="function">
    <text evidence="1">Involved in the synthesis of autoinducer 2 (AI-2) which is secreted by bacteria and is used to communicate both the cell density and the metabolic potential of the environment. The regulation of gene expression in response to changes in cell density is called quorum sensing. Catalyzes the transformation of S-ribosylhomocysteine (RHC) to homocysteine (HC) and 4,5-dihydroxy-2,3-pentadione (DPD).</text>
</comment>
<comment type="catalytic activity">
    <reaction evidence="1">
        <text>S-(5-deoxy-D-ribos-5-yl)-L-homocysteine = (S)-4,5-dihydroxypentane-2,3-dione + L-homocysteine</text>
        <dbReference type="Rhea" id="RHEA:17753"/>
        <dbReference type="ChEBI" id="CHEBI:29484"/>
        <dbReference type="ChEBI" id="CHEBI:58195"/>
        <dbReference type="ChEBI" id="CHEBI:58199"/>
        <dbReference type="EC" id="4.4.1.21"/>
    </reaction>
</comment>
<comment type="cofactor">
    <cofactor evidence="1">
        <name>Fe cation</name>
        <dbReference type="ChEBI" id="CHEBI:24875"/>
    </cofactor>
    <text evidence="1">Binds 1 Fe cation per subunit.</text>
</comment>
<comment type="subunit">
    <text evidence="1">Homodimer.</text>
</comment>
<comment type="similarity">
    <text evidence="1">Belongs to the LuxS family.</text>
</comment>
<feature type="chain" id="PRO_1000118533" description="S-ribosylhomocysteine lyase">
    <location>
        <begin position="1"/>
        <end position="157"/>
    </location>
</feature>
<feature type="binding site" evidence="1">
    <location>
        <position position="54"/>
    </location>
    <ligand>
        <name>Fe cation</name>
        <dbReference type="ChEBI" id="CHEBI:24875"/>
    </ligand>
</feature>
<feature type="binding site" evidence="1">
    <location>
        <position position="58"/>
    </location>
    <ligand>
        <name>Fe cation</name>
        <dbReference type="ChEBI" id="CHEBI:24875"/>
    </ligand>
</feature>
<feature type="binding site" evidence="1">
    <location>
        <position position="126"/>
    </location>
    <ligand>
        <name>Fe cation</name>
        <dbReference type="ChEBI" id="CHEBI:24875"/>
    </ligand>
</feature>
<name>LUXS_BACC3</name>
<reference key="1">
    <citation type="submission" date="2009-02" db="EMBL/GenBank/DDBJ databases">
        <title>Genome sequence of Bacillus cereus 03BB102.</title>
        <authorList>
            <person name="Dodson R.J."/>
            <person name="Jackson P."/>
            <person name="Munk A.C."/>
            <person name="Brettin T."/>
            <person name="Bruce D."/>
            <person name="Detter C."/>
            <person name="Tapia R."/>
            <person name="Han C."/>
            <person name="Sutton G."/>
            <person name="Sims D."/>
        </authorList>
    </citation>
    <scope>NUCLEOTIDE SEQUENCE [LARGE SCALE GENOMIC DNA]</scope>
    <source>
        <strain>03BB102</strain>
    </source>
</reference>
<proteinExistence type="inferred from homology"/>
<accession>C1EW66</accession>